<evidence type="ECO:0000250" key="1"/>
<evidence type="ECO:0000250" key="2">
    <source>
        <dbReference type="UniProtKB" id="P04746"/>
    </source>
</evidence>
<evidence type="ECO:0000250" key="3">
    <source>
        <dbReference type="UniProtKB" id="P56634"/>
    </source>
</evidence>
<evidence type="ECO:0000255" key="4"/>
<evidence type="ECO:0000305" key="5"/>
<keyword id="KW-0106">Calcium</keyword>
<keyword id="KW-0119">Carbohydrate metabolism</keyword>
<keyword id="KW-0868">Chloride</keyword>
<keyword id="KW-1015">Disulfide bond</keyword>
<keyword id="KW-0326">Glycosidase</keyword>
<keyword id="KW-0378">Hydrolase</keyword>
<keyword id="KW-0479">Metal-binding</keyword>
<keyword id="KW-0873">Pyrrolidone carboxylic acid</keyword>
<keyword id="KW-0964">Secreted</keyword>
<keyword id="KW-0732">Signal</keyword>
<comment type="catalytic activity">
    <reaction evidence="2">
        <text>Endohydrolysis of (1-&gt;4)-alpha-D-glucosidic linkages in polysaccharides containing three or more (1-&gt;4)-alpha-linked D-glucose units.</text>
        <dbReference type="EC" id="3.2.1.1"/>
    </reaction>
</comment>
<comment type="cofactor">
    <cofactor evidence="3">
        <name>Ca(2+)</name>
        <dbReference type="ChEBI" id="CHEBI:29108"/>
    </cofactor>
    <text evidence="3">Binds 1 Ca(2+) ion per subunit.</text>
</comment>
<comment type="cofactor">
    <cofactor evidence="3">
        <name>chloride</name>
        <dbReference type="ChEBI" id="CHEBI:17996"/>
    </cofactor>
    <text evidence="3">Binds 1 Cl(-) ion per subunit.</text>
</comment>
<comment type="subunit">
    <text evidence="1">Monomer.</text>
</comment>
<comment type="subcellular location">
    <subcellularLocation>
        <location evidence="5">Secreted</location>
    </subcellularLocation>
</comment>
<comment type="similarity">
    <text evidence="5">Belongs to the glycosyl hydrolase 13 family.</text>
</comment>
<protein>
    <recommendedName>
        <fullName>Alpha-amylase-related protein</fullName>
        <ecNumber evidence="2">3.2.1.1</ecNumber>
    </recommendedName>
</protein>
<feature type="signal peptide" evidence="1">
    <location>
        <begin position="1"/>
        <end position="20"/>
    </location>
</feature>
<feature type="chain" id="PRO_0000001372" description="Alpha-amylase-related protein">
    <location>
        <begin position="21"/>
        <end position="494"/>
    </location>
</feature>
<feature type="active site" description="Nucleophile" evidence="2">
    <location>
        <position position="208"/>
    </location>
</feature>
<feature type="active site" description="Proton donor" evidence="2">
    <location>
        <position position="245"/>
    </location>
</feature>
<feature type="binding site" evidence="3">
    <location>
        <position position="118"/>
    </location>
    <ligand>
        <name>Ca(2+)</name>
        <dbReference type="ChEBI" id="CHEBI:29108"/>
    </ligand>
</feature>
<feature type="binding site" evidence="3">
    <location>
        <position position="169"/>
    </location>
    <ligand>
        <name>Ca(2+)</name>
        <dbReference type="ChEBI" id="CHEBI:29108"/>
    </ligand>
</feature>
<feature type="binding site" evidence="3">
    <location>
        <position position="178"/>
    </location>
    <ligand>
        <name>Ca(2+)</name>
        <dbReference type="ChEBI" id="CHEBI:29108"/>
    </ligand>
</feature>
<feature type="binding site" evidence="3">
    <location>
        <position position="206"/>
    </location>
    <ligand>
        <name>chloride</name>
        <dbReference type="ChEBI" id="CHEBI:17996"/>
    </ligand>
</feature>
<feature type="binding site" evidence="3">
    <location>
        <position position="212"/>
    </location>
    <ligand>
        <name>Ca(2+)</name>
        <dbReference type="ChEBI" id="CHEBI:29108"/>
    </ligand>
</feature>
<feature type="binding site" evidence="3">
    <location>
        <position position="308"/>
    </location>
    <ligand>
        <name>chloride</name>
        <dbReference type="ChEBI" id="CHEBI:17996"/>
    </ligand>
</feature>
<feature type="binding site" evidence="3">
    <location>
        <position position="343"/>
    </location>
    <ligand>
        <name>chloride</name>
        <dbReference type="ChEBI" id="CHEBI:17996"/>
    </ligand>
</feature>
<feature type="site" description="Transition state stabilizer" evidence="2">
    <location>
        <position position="310"/>
    </location>
</feature>
<feature type="modified residue" description="Pyrrolidone carboxylic acid" evidence="1">
    <location>
        <position position="21"/>
    </location>
</feature>
<feature type="disulfide bond" evidence="3">
    <location>
        <begin position="48"/>
        <end position="104"/>
    </location>
</feature>
<feature type="disulfide bond" evidence="3">
    <location>
        <begin position="157"/>
        <end position="171"/>
    </location>
</feature>
<feature type="disulfide bond" evidence="3">
    <location>
        <begin position="376"/>
        <end position="382"/>
    </location>
</feature>
<feature type="disulfide bond" evidence="4">
    <location>
        <begin position="418"/>
        <end position="441"/>
    </location>
</feature>
<feature type="disulfide bond" evidence="3">
    <location>
        <begin position="448"/>
        <end position="460"/>
    </location>
</feature>
<name>AMYR_DROBC</name>
<proteinExistence type="inferred from homology"/>
<organism>
    <name type="scientific">Drosophila bocqueti</name>
    <name type="common">Fruit fly</name>
    <dbReference type="NCBI Taxonomy" id="74549"/>
    <lineage>
        <taxon>Eukaryota</taxon>
        <taxon>Metazoa</taxon>
        <taxon>Ecdysozoa</taxon>
        <taxon>Arthropoda</taxon>
        <taxon>Hexapoda</taxon>
        <taxon>Insecta</taxon>
        <taxon>Pterygota</taxon>
        <taxon>Neoptera</taxon>
        <taxon>Endopterygota</taxon>
        <taxon>Diptera</taxon>
        <taxon>Brachycera</taxon>
        <taxon>Muscomorpha</taxon>
        <taxon>Ephydroidea</taxon>
        <taxon>Drosophilidae</taxon>
        <taxon>Drosophila</taxon>
        <taxon>Sophophora</taxon>
    </lineage>
</organism>
<dbReference type="EC" id="3.2.1.1" evidence="2"/>
<dbReference type="EMBL" id="AF049092">
    <property type="protein sequence ID" value="AAC39100.2"/>
    <property type="molecule type" value="Genomic_DNA"/>
</dbReference>
<dbReference type="SMR" id="O76284"/>
<dbReference type="CAZy" id="GH13">
    <property type="family name" value="Glycoside Hydrolase Family 13"/>
</dbReference>
<dbReference type="GO" id="GO:0005576">
    <property type="term" value="C:extracellular region"/>
    <property type="evidence" value="ECO:0007669"/>
    <property type="project" value="UniProtKB-SubCell"/>
</dbReference>
<dbReference type="GO" id="GO:0004556">
    <property type="term" value="F:alpha-amylase activity"/>
    <property type="evidence" value="ECO:0007669"/>
    <property type="project" value="UniProtKB-EC"/>
</dbReference>
<dbReference type="GO" id="GO:0046872">
    <property type="term" value="F:metal ion binding"/>
    <property type="evidence" value="ECO:0007669"/>
    <property type="project" value="UniProtKB-KW"/>
</dbReference>
<dbReference type="GO" id="GO:0005975">
    <property type="term" value="P:carbohydrate metabolic process"/>
    <property type="evidence" value="ECO:0007669"/>
    <property type="project" value="InterPro"/>
</dbReference>
<dbReference type="CDD" id="cd11317">
    <property type="entry name" value="AmyAc_bac_euk_AmyA"/>
    <property type="match status" value="1"/>
</dbReference>
<dbReference type="FunFam" id="3.20.20.80:FF:000119">
    <property type="entry name" value="Alpha-amylase-related protein"/>
    <property type="match status" value="1"/>
</dbReference>
<dbReference type="FunFam" id="2.60.40.1180:FF:000020">
    <property type="entry name" value="Pancreatic alpha-amylase"/>
    <property type="match status" value="1"/>
</dbReference>
<dbReference type="Gene3D" id="3.20.20.80">
    <property type="entry name" value="Glycosidases"/>
    <property type="match status" value="1"/>
</dbReference>
<dbReference type="Gene3D" id="2.60.40.1180">
    <property type="entry name" value="Golgi alpha-mannosidase II"/>
    <property type="match status" value="1"/>
</dbReference>
<dbReference type="InterPro" id="IPR006048">
    <property type="entry name" value="A-amylase/branching_C"/>
</dbReference>
<dbReference type="InterPro" id="IPR031319">
    <property type="entry name" value="A-amylase_C"/>
</dbReference>
<dbReference type="InterPro" id="IPR006046">
    <property type="entry name" value="Alpha_amylase"/>
</dbReference>
<dbReference type="InterPro" id="IPR006047">
    <property type="entry name" value="Glyco_hydro_13_cat_dom"/>
</dbReference>
<dbReference type="InterPro" id="IPR013780">
    <property type="entry name" value="Glyco_hydro_b"/>
</dbReference>
<dbReference type="InterPro" id="IPR017853">
    <property type="entry name" value="Glycoside_hydrolase_SF"/>
</dbReference>
<dbReference type="PANTHER" id="PTHR43447">
    <property type="entry name" value="ALPHA-AMYLASE"/>
    <property type="match status" value="1"/>
</dbReference>
<dbReference type="Pfam" id="PF00128">
    <property type="entry name" value="Alpha-amylase"/>
    <property type="match status" value="1"/>
</dbReference>
<dbReference type="Pfam" id="PF02806">
    <property type="entry name" value="Alpha-amylase_C"/>
    <property type="match status" value="1"/>
</dbReference>
<dbReference type="PRINTS" id="PR00110">
    <property type="entry name" value="ALPHAAMYLASE"/>
</dbReference>
<dbReference type="SMART" id="SM00642">
    <property type="entry name" value="Aamy"/>
    <property type="match status" value="1"/>
</dbReference>
<dbReference type="SMART" id="SM00632">
    <property type="entry name" value="Aamy_C"/>
    <property type="match status" value="1"/>
</dbReference>
<dbReference type="SUPFAM" id="SSF51445">
    <property type="entry name" value="(Trans)glycosidases"/>
    <property type="match status" value="1"/>
</dbReference>
<dbReference type="SUPFAM" id="SSF51011">
    <property type="entry name" value="Glycosyl hydrolase domain"/>
    <property type="match status" value="1"/>
</dbReference>
<accession>O76284</accession>
<gene>
    <name type="primary">Amyrel</name>
</gene>
<reference key="1">
    <citation type="submission" date="2001-12" db="EMBL/GenBank/DDBJ databases">
        <authorList>
            <person name="Da Lage J.-L."/>
        </authorList>
    </citation>
    <scope>NUCLEOTIDE SEQUENCE [GENOMIC DNA]</scope>
</reference>
<sequence length="494" mass="55613">MIKFALALTLCLAGASLSLAQHNPQWWGNRNTIVHLFEWKWSDIAEECETFLAPRGFAGVQVSPVNENIISAGRPWWERYQPISYKLTTRSGNEEEFADMVRRCNDVGIRIYVDVLLNHMSGDFDGVAVGTAGTEAEPSKKSFPGVPYTAQDFHPSCEITDWNNRFQVQECELVGLKDLNQHSDYVRSKLIEFLDHLIELGVAGFRVDAAKHMAAEDLEYIYGSLSNLNIEHGFPHNARPFIFQEVIDHGHETVSREEYNQLGAVTEFRFSEEIGNAFRGNNALKWLQSWGTGWGFLSSEQAFTFVDNHDNQRDQGSVLNYKSPRQYKMATAFHLANPYGIIRVMSSFAFDDQDTPPPQDAQENIISPEFDEDGACVNGWICEHRWRQIYAMVGFKNAVRDTELSGWWDNGDNQISFCRGNKGFLAVNNNQYDLSQELNTCLPAGEYCDVISGSLIDGACTGKSVTVNEHGYGYIHIGSDDFDGVLALHVNAKV</sequence>